<evidence type="ECO:0000255" key="1">
    <source>
        <dbReference type="HAMAP-Rule" id="MF_01523"/>
    </source>
</evidence>
<evidence type="ECO:0000269" key="2">
    <source>
    </source>
</evidence>
<evidence type="ECO:0000305" key="3"/>
<feature type="chain" id="PRO_0000212064" description="Ribosomal RNA small subunit methyltransferase J">
    <location>
        <begin position="1"/>
        <end position="250"/>
    </location>
</feature>
<feature type="binding site" evidence="1">
    <location>
        <begin position="101"/>
        <end position="102"/>
    </location>
    <ligand>
        <name>S-adenosyl-L-methionine</name>
        <dbReference type="ChEBI" id="CHEBI:59789"/>
    </ligand>
</feature>
<feature type="binding site" evidence="1">
    <location>
        <begin position="117"/>
        <end position="118"/>
    </location>
    <ligand>
        <name>S-adenosyl-L-methionine</name>
        <dbReference type="ChEBI" id="CHEBI:59789"/>
    </ligand>
</feature>
<feature type="binding site" evidence="1">
    <location>
        <begin position="153"/>
        <end position="154"/>
    </location>
    <ligand>
        <name>S-adenosyl-L-methionine</name>
        <dbReference type="ChEBI" id="CHEBI:59789"/>
    </ligand>
</feature>
<feature type="binding site" evidence="1">
    <location>
        <position position="171"/>
    </location>
    <ligand>
        <name>S-adenosyl-L-methionine</name>
        <dbReference type="ChEBI" id="CHEBI:59789"/>
    </ligand>
</feature>
<name>RSMJ_ECOLI</name>
<comment type="function">
    <text evidence="1 2">Specifically methylates the guanosine in position 1516 of 16S rRNA.</text>
</comment>
<comment type="catalytic activity">
    <reaction evidence="1 2">
        <text>guanosine(1516) in 16S rRNA + S-adenosyl-L-methionine = N(2)-methylguanosine(1516) in 16S rRNA + S-adenosyl-L-homocysteine + H(+)</text>
        <dbReference type="Rhea" id="RHEA:43220"/>
        <dbReference type="Rhea" id="RHEA-COMP:10412"/>
        <dbReference type="Rhea" id="RHEA-COMP:10413"/>
        <dbReference type="ChEBI" id="CHEBI:15378"/>
        <dbReference type="ChEBI" id="CHEBI:57856"/>
        <dbReference type="ChEBI" id="CHEBI:59789"/>
        <dbReference type="ChEBI" id="CHEBI:74269"/>
        <dbReference type="ChEBI" id="CHEBI:74481"/>
        <dbReference type="EC" id="2.1.1.242"/>
    </reaction>
</comment>
<comment type="subcellular location">
    <subcellularLocation>
        <location evidence="1">Cytoplasm</location>
    </subcellularLocation>
</comment>
<comment type="disruption phenotype">
    <text evidence="2">Mutants exhibit a cold-sensitive phenotype.</text>
</comment>
<comment type="similarity">
    <text evidence="1">Belongs to the methyltransferase superfamily. RsmJ family.</text>
</comment>
<comment type="sequence caution" evidence="3">
    <conflict type="erroneous initiation">
        <sequence resource="EMBL-CDS" id="AAB18473"/>
    </conflict>
    <text>Extended N-terminus.</text>
</comment>
<accession>P68567</accession>
<accession>P37633</accession>
<accession>P76707</accession>
<accession>Q2M7F9</accession>
<gene>
    <name evidence="1" type="primary">rsmJ</name>
    <name type="synonym">yhiQ</name>
    <name type="ordered locus">b3497</name>
    <name type="ordered locus">JW5672</name>
</gene>
<organism>
    <name type="scientific">Escherichia coli (strain K12)</name>
    <dbReference type="NCBI Taxonomy" id="83333"/>
    <lineage>
        <taxon>Bacteria</taxon>
        <taxon>Pseudomonadati</taxon>
        <taxon>Pseudomonadota</taxon>
        <taxon>Gammaproteobacteria</taxon>
        <taxon>Enterobacterales</taxon>
        <taxon>Enterobacteriaceae</taxon>
        <taxon>Escherichia</taxon>
    </lineage>
</organism>
<reference key="1">
    <citation type="journal article" date="1994" name="Nucleic Acids Res.">
        <title>Analysis of the Escherichia coli genome. V. DNA sequence of the region from 76.0 to 81.5 minutes.</title>
        <authorList>
            <person name="Sofia H.J."/>
            <person name="Burland V."/>
            <person name="Daniels D.L."/>
            <person name="Plunkett G. III"/>
            <person name="Blattner F.R."/>
        </authorList>
    </citation>
    <scope>NUCLEOTIDE SEQUENCE [LARGE SCALE GENOMIC DNA]</scope>
    <source>
        <strain>K12 / MG1655 / ATCC 47076</strain>
    </source>
</reference>
<reference key="2">
    <citation type="journal article" date="1997" name="Science">
        <title>The complete genome sequence of Escherichia coli K-12.</title>
        <authorList>
            <person name="Blattner F.R."/>
            <person name="Plunkett G. III"/>
            <person name="Bloch C.A."/>
            <person name="Perna N.T."/>
            <person name="Burland V."/>
            <person name="Riley M."/>
            <person name="Collado-Vides J."/>
            <person name="Glasner J.D."/>
            <person name="Rode C.K."/>
            <person name="Mayhew G.F."/>
            <person name="Gregor J."/>
            <person name="Davis N.W."/>
            <person name="Kirkpatrick H.A."/>
            <person name="Goeden M.A."/>
            <person name="Rose D.J."/>
            <person name="Mau B."/>
            <person name="Shao Y."/>
        </authorList>
    </citation>
    <scope>NUCLEOTIDE SEQUENCE [LARGE SCALE GENOMIC DNA]</scope>
    <source>
        <strain>K12 / MG1655 / ATCC 47076</strain>
    </source>
</reference>
<reference key="3">
    <citation type="journal article" date="2006" name="Mol. Syst. Biol.">
        <title>Highly accurate genome sequences of Escherichia coli K-12 strains MG1655 and W3110.</title>
        <authorList>
            <person name="Hayashi K."/>
            <person name="Morooka N."/>
            <person name="Yamamoto Y."/>
            <person name="Fujita K."/>
            <person name="Isono K."/>
            <person name="Choi S."/>
            <person name="Ohtsubo E."/>
            <person name="Baba T."/>
            <person name="Wanner B.L."/>
            <person name="Mori H."/>
            <person name="Horiuchi T."/>
        </authorList>
    </citation>
    <scope>NUCLEOTIDE SEQUENCE [LARGE SCALE GENOMIC DNA]</scope>
    <source>
        <strain>K12 / W3110 / ATCC 27325 / DSM 5911</strain>
    </source>
</reference>
<reference key="4">
    <citation type="journal article" date="2012" name="J. Mol. Biol.">
        <title>YhiQ is RsmJ, the methyltransferase responsible for methylation of G1516 in 16S rRNA of E. coli.</title>
        <authorList>
            <person name="Basturea G.N."/>
            <person name="Dague D.R."/>
            <person name="Deutscher M.P."/>
            <person name="Rudd K.E."/>
        </authorList>
    </citation>
    <scope>FUNCTION</scope>
    <scope>CATALYTIC ACTIVITY</scope>
    <scope>DISRUPTION PHENOTYPE</scope>
    <source>
        <strain>K12 / MG1655 / ATCC 47076</strain>
    </source>
</reference>
<sequence length="250" mass="26949">MKICLIDETGTGDGALSVLAARWGLEHDEDNLMALVLTPEHLELRKRDEPKLGGIFVDFVGGAMAHRRKFGGGRGEAVAKAVGIKGDYLPDVVDATAGLGRDAFVLASVGCRVRMLERNPVVAALLDDGLARGYADAEIGGWLQERLQLIHASSLTALTDITPRPQVVYLDPMFPHKQKSALVKKEMRVFQSLVGPDLDADGLLEPARLLATKRVVVKRPDYAPPLANVATPNAVVTKGHRFDIYAGTPV</sequence>
<proteinExistence type="evidence at protein level"/>
<keyword id="KW-0963">Cytoplasm</keyword>
<keyword id="KW-0489">Methyltransferase</keyword>
<keyword id="KW-1185">Reference proteome</keyword>
<keyword id="KW-0698">rRNA processing</keyword>
<keyword id="KW-0949">S-adenosyl-L-methionine</keyword>
<keyword id="KW-0808">Transferase</keyword>
<protein>
    <recommendedName>
        <fullName evidence="1">Ribosomal RNA small subunit methyltransferase J</fullName>
        <ecNumber evidence="1">2.1.1.242</ecNumber>
    </recommendedName>
    <alternativeName>
        <fullName evidence="1">16S rRNA m2G1516 methyltransferase</fullName>
    </alternativeName>
    <alternativeName>
        <fullName evidence="1">rRNA (guanine-N(2)-)-methyltransferase</fullName>
    </alternativeName>
</protein>
<dbReference type="EC" id="2.1.1.242" evidence="1"/>
<dbReference type="EMBL" id="U00039">
    <property type="protein sequence ID" value="AAB18473.1"/>
    <property type="status" value="ALT_INIT"/>
    <property type="molecule type" value="Genomic_DNA"/>
</dbReference>
<dbReference type="EMBL" id="U00096">
    <property type="protein sequence ID" value="AAC76522.1"/>
    <property type="molecule type" value="Genomic_DNA"/>
</dbReference>
<dbReference type="EMBL" id="AP009048">
    <property type="protein sequence ID" value="BAE77797.1"/>
    <property type="molecule type" value="Genomic_DNA"/>
</dbReference>
<dbReference type="PIR" id="D65147">
    <property type="entry name" value="D65147"/>
</dbReference>
<dbReference type="RefSeq" id="NP_417954.1">
    <property type="nucleotide sequence ID" value="NC_000913.3"/>
</dbReference>
<dbReference type="RefSeq" id="WP_000686620.1">
    <property type="nucleotide sequence ID" value="NZ_SSUR01000018.1"/>
</dbReference>
<dbReference type="SMR" id="P68567"/>
<dbReference type="BioGRID" id="4259385">
    <property type="interactions" value="13"/>
</dbReference>
<dbReference type="BioGRID" id="852313">
    <property type="interactions" value="6"/>
</dbReference>
<dbReference type="FunCoup" id="P68567">
    <property type="interactions" value="24"/>
</dbReference>
<dbReference type="IntAct" id="P68567">
    <property type="interactions" value="7"/>
</dbReference>
<dbReference type="STRING" id="511145.b3497"/>
<dbReference type="jPOST" id="P68567"/>
<dbReference type="PaxDb" id="511145-b3497"/>
<dbReference type="EnsemblBacteria" id="AAC76522">
    <property type="protein sequence ID" value="AAC76522"/>
    <property type="gene ID" value="b3497"/>
</dbReference>
<dbReference type="GeneID" id="948005"/>
<dbReference type="KEGG" id="ecj:JW5672"/>
<dbReference type="KEGG" id="eco:b3497"/>
<dbReference type="KEGG" id="ecoc:C3026_18940"/>
<dbReference type="PATRIC" id="fig|511145.12.peg.3599"/>
<dbReference type="EchoBASE" id="EB2145"/>
<dbReference type="eggNOG" id="COG0742">
    <property type="taxonomic scope" value="Bacteria"/>
</dbReference>
<dbReference type="HOGENOM" id="CLU_076324_0_0_6"/>
<dbReference type="InParanoid" id="P68567"/>
<dbReference type="OMA" id="YDIYPKK"/>
<dbReference type="OrthoDB" id="3191794at2"/>
<dbReference type="PhylomeDB" id="P68567"/>
<dbReference type="BioCyc" id="EcoCyc:EG12233-MONOMER"/>
<dbReference type="BioCyc" id="MetaCyc:EG12233-MONOMER"/>
<dbReference type="PRO" id="PR:P68567"/>
<dbReference type="Proteomes" id="UP000000625">
    <property type="component" value="Chromosome"/>
</dbReference>
<dbReference type="GO" id="GO:0005737">
    <property type="term" value="C:cytoplasm"/>
    <property type="evidence" value="ECO:0007669"/>
    <property type="project" value="UniProtKB-SubCell"/>
</dbReference>
<dbReference type="GO" id="GO:0036308">
    <property type="term" value="F:16S rRNA (guanine(1516)-N(2))-methyltransferase activity"/>
    <property type="evidence" value="ECO:0000314"/>
    <property type="project" value="EcoCyc"/>
</dbReference>
<dbReference type="GO" id="GO:0008990">
    <property type="term" value="F:rRNA (guanine-N2-)-methyltransferase activity"/>
    <property type="evidence" value="ECO:0000314"/>
    <property type="project" value="UniProtKB"/>
</dbReference>
<dbReference type="GO" id="GO:0070475">
    <property type="term" value="P:rRNA base methylation"/>
    <property type="evidence" value="ECO:0000315"/>
    <property type="project" value="EcoCyc"/>
</dbReference>
<dbReference type="GO" id="GO:0031167">
    <property type="term" value="P:rRNA methylation"/>
    <property type="evidence" value="ECO:0000314"/>
    <property type="project" value="UniProtKB"/>
</dbReference>
<dbReference type="CDD" id="cd02440">
    <property type="entry name" value="AdoMet_MTases"/>
    <property type="match status" value="1"/>
</dbReference>
<dbReference type="FunFam" id="3.40.1630.10:FF:000001">
    <property type="entry name" value="Ribosomal RNA small subunit methyltransferase J"/>
    <property type="match status" value="1"/>
</dbReference>
<dbReference type="FunFam" id="3.40.50.150:FF:000072">
    <property type="entry name" value="Ribosomal RNA small subunit methyltransferase J"/>
    <property type="match status" value="1"/>
</dbReference>
<dbReference type="Gene3D" id="3.40.50.150">
    <property type="entry name" value="Vaccinia Virus protein VP39"/>
    <property type="match status" value="1"/>
</dbReference>
<dbReference type="Gene3D" id="3.40.1630.10">
    <property type="entry name" value="YhiQ-like domain"/>
    <property type="match status" value="1"/>
</dbReference>
<dbReference type="HAMAP" id="MF_01523">
    <property type="entry name" value="16SrRNA_methyltr_J"/>
    <property type="match status" value="1"/>
</dbReference>
<dbReference type="InterPro" id="IPR007536">
    <property type="entry name" value="16SrRNA_methylTrfase_J"/>
</dbReference>
<dbReference type="InterPro" id="IPR029063">
    <property type="entry name" value="SAM-dependent_MTases_sf"/>
</dbReference>
<dbReference type="NCBIfam" id="NF008012">
    <property type="entry name" value="PRK10742.1"/>
    <property type="match status" value="1"/>
</dbReference>
<dbReference type="PANTHER" id="PTHR36112">
    <property type="entry name" value="RIBOSOMAL RNA SMALL SUBUNIT METHYLTRANSFERASE J"/>
    <property type="match status" value="1"/>
</dbReference>
<dbReference type="PANTHER" id="PTHR36112:SF1">
    <property type="entry name" value="RIBOSOMAL RNA SMALL SUBUNIT METHYLTRANSFERASE J"/>
    <property type="match status" value="1"/>
</dbReference>
<dbReference type="Pfam" id="PF04445">
    <property type="entry name" value="SAM_MT"/>
    <property type="match status" value="1"/>
</dbReference>
<dbReference type="SUPFAM" id="SSF53335">
    <property type="entry name" value="S-adenosyl-L-methionine-dependent methyltransferases"/>
    <property type="match status" value="1"/>
</dbReference>